<keyword id="KW-0025">Alternative splicing</keyword>
<keyword id="KW-1003">Cell membrane</keyword>
<keyword id="KW-0168">Coated pit</keyword>
<keyword id="KW-0963">Cytoplasm</keyword>
<keyword id="KW-0254">Endocytosis</keyword>
<keyword id="KW-0446">Lipid-binding</keyword>
<keyword id="KW-0472">Membrane</keyword>
<keyword id="KW-0488">Methylation</keyword>
<keyword id="KW-0539">Nucleus</keyword>
<keyword id="KW-0597">Phosphoprotein</keyword>
<keyword id="KW-1185">Reference proteome</keyword>
<keyword id="KW-0677">Repeat</keyword>
<keyword id="KW-0832">Ubl conjugation</keyword>
<gene>
    <name type="primary">Epn1</name>
</gene>
<accession>Q80VP1</accession>
<accession>O70446</accession>
<accession>Q6NX78</accession>
<reference key="1">
    <citation type="journal article" date="2004" name="Genome Res.">
        <title>The status, quality, and expansion of the NIH full-length cDNA project: the Mammalian Gene Collection (MGC).</title>
        <authorList>
            <consortium name="The MGC Project Team"/>
        </authorList>
    </citation>
    <scope>NUCLEOTIDE SEQUENCE [LARGE SCALE MRNA] (ISOFORM 1)</scope>
    <source>
        <strain>FVB/N</strain>
        <tissue>Colon</tissue>
        <tissue>Limb</tissue>
        <tissue>Olfactory epithelium</tissue>
    </source>
</reference>
<reference key="2">
    <citation type="journal article" date="1998" name="J. Biol. Chem.">
        <title>Intersectin, a novel adaptor protein with two eps15 homology and five src homology 3 domains.</title>
        <authorList>
            <person name="Yamabhai M."/>
            <person name="Hoffman N.G."/>
            <person name="Hardison N.L."/>
            <person name="McPherson P.S."/>
            <person name="Castagnoli L."/>
            <person name="Cesareni G."/>
            <person name="Kay B.K."/>
        </authorList>
    </citation>
    <scope>NUCLEOTIDE SEQUENCE [MRNA] OF 365-575 (ISOFORM 2)</scope>
    <scope>INTERACTION WITH ITSN1</scope>
    <source>
        <tissue>Embryo</tissue>
    </source>
</reference>
<reference key="3">
    <citation type="journal article" date="1999" name="J. Biol. Chem.">
        <title>The interaction of epsin and Eps15 with the clathrin adaptor AP-2 is inhibited by mitotic phosphorylation and enhanced by stimulation-dependent dephosphorylation in nerve terminals.</title>
        <authorList>
            <person name="Chen H."/>
            <person name="Slepnev V.I."/>
            <person name="Di Fiore P.P."/>
            <person name="De Camilli P."/>
        </authorList>
    </citation>
    <scope>PHOSPHORYLATION</scope>
    <scope>INTERACTION WITH AP2A1 AND AP2A2</scope>
</reference>
<reference key="4">
    <citation type="journal article" date="2004" name="Mol. Cell. Proteomics">
        <title>Phosphoproteomic analysis of the developing mouse brain.</title>
        <authorList>
            <person name="Ballif B.A."/>
            <person name="Villen J."/>
            <person name="Beausoleil S.A."/>
            <person name="Schwartz D."/>
            <person name="Gygi S.P."/>
        </authorList>
    </citation>
    <scope>IDENTIFICATION BY MASS SPECTROMETRY [LARGE SCALE ANALYSIS]</scope>
    <source>
        <tissue>Embryonic brain</tissue>
    </source>
</reference>
<reference key="5">
    <citation type="journal article" date="2007" name="Proc. Natl. Acad. Sci. U.S.A.">
        <title>Large-scale phosphorylation analysis of mouse liver.</title>
        <authorList>
            <person name="Villen J."/>
            <person name="Beausoleil S.A."/>
            <person name="Gerber S.A."/>
            <person name="Gygi S.P."/>
        </authorList>
    </citation>
    <scope>IDENTIFICATION BY MASS SPECTROMETRY [LARGE SCALE ANALYSIS]</scope>
    <source>
        <tissue>Liver</tissue>
    </source>
</reference>
<reference key="6">
    <citation type="journal article" date="2009" name="Immunity">
        <title>The phagosomal proteome in interferon-gamma-activated macrophages.</title>
        <authorList>
            <person name="Trost M."/>
            <person name="English L."/>
            <person name="Lemieux S."/>
            <person name="Courcelles M."/>
            <person name="Desjardins M."/>
            <person name="Thibault P."/>
        </authorList>
    </citation>
    <scope>PHOSPHORYLATION [LARGE SCALE ANALYSIS] AT THR-469</scope>
    <scope>IDENTIFICATION BY MASS SPECTROMETRY [LARGE SCALE ANALYSIS]</scope>
</reference>
<reference key="7">
    <citation type="journal article" date="2010" name="Cell">
        <title>A tissue-specific atlas of mouse protein phosphorylation and expression.</title>
        <authorList>
            <person name="Huttlin E.L."/>
            <person name="Jedrychowski M.P."/>
            <person name="Elias J.E."/>
            <person name="Goswami T."/>
            <person name="Rad R."/>
            <person name="Beausoleil S.A."/>
            <person name="Villen J."/>
            <person name="Haas W."/>
            <person name="Sowa M.E."/>
            <person name="Gygi S.P."/>
        </authorList>
    </citation>
    <scope>PHOSPHORYLATION [LARGE SCALE ANALYSIS] AT SER-418; SER-419; THR-420; THR-459; THR-469; SER-472 AND THR-493</scope>
    <scope>IDENTIFICATION BY MASS SPECTROMETRY [LARGE SCALE ANALYSIS]</scope>
    <source>
        <tissue>Brain</tissue>
        <tissue>Brown adipose tissue</tissue>
        <tissue>Heart</tissue>
        <tissue>Kidney</tissue>
        <tissue>Liver</tissue>
        <tissue>Lung</tissue>
        <tissue>Pancreas</tissue>
        <tissue>Spleen</tissue>
        <tissue>Testis</tissue>
    </source>
</reference>
<reference key="8">
    <citation type="journal article" date="2014" name="Mol. Cell. Proteomics">
        <title>Immunoaffinity enrichment and mass spectrometry analysis of protein methylation.</title>
        <authorList>
            <person name="Guo A."/>
            <person name="Gu H."/>
            <person name="Zhou J."/>
            <person name="Mulhern D."/>
            <person name="Wang Y."/>
            <person name="Lee K.A."/>
            <person name="Yang V."/>
            <person name="Aguiar M."/>
            <person name="Kornhauser J."/>
            <person name="Jia X."/>
            <person name="Ren J."/>
            <person name="Beausoleil S.A."/>
            <person name="Silva J.C."/>
            <person name="Vemulapalli V."/>
            <person name="Bedford M.T."/>
            <person name="Comb M.J."/>
        </authorList>
    </citation>
    <scope>METHYLATION [LARGE SCALE ANALYSIS] AT ARG-533</scope>
    <scope>IDENTIFICATION BY MASS SPECTROMETRY [LARGE SCALE ANALYSIS]</scope>
    <source>
        <tissue>Brain</tissue>
    </source>
</reference>
<proteinExistence type="evidence at protein level"/>
<organism>
    <name type="scientific">Mus musculus</name>
    <name type="common">Mouse</name>
    <dbReference type="NCBI Taxonomy" id="10090"/>
    <lineage>
        <taxon>Eukaryota</taxon>
        <taxon>Metazoa</taxon>
        <taxon>Chordata</taxon>
        <taxon>Craniata</taxon>
        <taxon>Vertebrata</taxon>
        <taxon>Euteleostomi</taxon>
        <taxon>Mammalia</taxon>
        <taxon>Eutheria</taxon>
        <taxon>Euarchontoglires</taxon>
        <taxon>Glires</taxon>
        <taxon>Rodentia</taxon>
        <taxon>Myomorpha</taxon>
        <taxon>Muroidea</taxon>
        <taxon>Muridae</taxon>
        <taxon>Murinae</taxon>
        <taxon>Mus</taxon>
        <taxon>Mus</taxon>
    </lineage>
</organism>
<dbReference type="EMBL" id="BC046962">
    <property type="protein sequence ID" value="AAH46962.2"/>
    <property type="molecule type" value="mRNA"/>
</dbReference>
<dbReference type="EMBL" id="BC067206">
    <property type="protein sequence ID" value="AAH67206.1"/>
    <property type="molecule type" value="mRNA"/>
</dbReference>
<dbReference type="EMBL" id="BC099682">
    <property type="protein sequence ID" value="AAH99682.1"/>
    <property type="molecule type" value="mRNA"/>
</dbReference>
<dbReference type="EMBL" id="AF057285">
    <property type="protein sequence ID" value="AAC97475.1"/>
    <property type="molecule type" value="mRNA"/>
</dbReference>
<dbReference type="CCDS" id="CCDS20758.1">
    <molecule id="Q80VP1-1"/>
</dbReference>
<dbReference type="CCDS" id="CCDS90155.1">
    <molecule id="Q80VP1-2"/>
</dbReference>
<dbReference type="RefSeq" id="NP_001239383.1">
    <molecule id="Q80VP1-1"/>
    <property type="nucleotide sequence ID" value="NM_001252454.2"/>
</dbReference>
<dbReference type="RefSeq" id="NP_001359429.1">
    <molecule id="Q80VP1-2"/>
    <property type="nucleotide sequence ID" value="NM_001372500.1"/>
</dbReference>
<dbReference type="RefSeq" id="NP_001399266.1">
    <molecule id="Q80VP1-1"/>
    <property type="nucleotide sequence ID" value="NM_001412337.1"/>
</dbReference>
<dbReference type="RefSeq" id="NP_001399267.1">
    <molecule id="Q80VP1-1"/>
    <property type="nucleotide sequence ID" value="NM_001412338.1"/>
</dbReference>
<dbReference type="RefSeq" id="NP_001399268.1">
    <molecule id="Q80VP1-1"/>
    <property type="nucleotide sequence ID" value="NM_001412339.1"/>
</dbReference>
<dbReference type="RefSeq" id="NP_001399269.1">
    <molecule id="Q80VP1-1"/>
    <property type="nucleotide sequence ID" value="NM_001412340.1"/>
</dbReference>
<dbReference type="RefSeq" id="NP_001399270.1">
    <molecule id="Q80VP1-1"/>
    <property type="nucleotide sequence ID" value="NM_001412341.1"/>
</dbReference>
<dbReference type="RefSeq" id="NP_001399271.1">
    <molecule id="Q80VP1-1"/>
    <property type="nucleotide sequence ID" value="NM_001412342.1"/>
</dbReference>
<dbReference type="RefSeq" id="NP_001399272.1">
    <molecule id="Q80VP1-1"/>
    <property type="nucleotide sequence ID" value="NM_001412343.1"/>
</dbReference>
<dbReference type="RefSeq" id="NP_001399273.1">
    <molecule id="Q80VP1-1"/>
    <property type="nucleotide sequence ID" value="NM_001412344.1"/>
</dbReference>
<dbReference type="RefSeq" id="NP_001399274.1">
    <molecule id="Q80VP1-2"/>
    <property type="nucleotide sequence ID" value="NM_001412345.1"/>
</dbReference>
<dbReference type="RefSeq" id="NP_001399275.1">
    <molecule id="Q80VP1-2"/>
    <property type="nucleotide sequence ID" value="NM_001412346.1"/>
</dbReference>
<dbReference type="RefSeq" id="NP_001399276.1">
    <molecule id="Q80VP1-2"/>
    <property type="nucleotide sequence ID" value="NM_001412347.1"/>
</dbReference>
<dbReference type="RefSeq" id="NP_001399277.1">
    <molecule id="Q80VP1-2"/>
    <property type="nucleotide sequence ID" value="NM_001412348.1"/>
</dbReference>
<dbReference type="RefSeq" id="NP_001399278.1">
    <molecule id="Q80VP1-2"/>
    <property type="nucleotide sequence ID" value="NM_001412349.1"/>
</dbReference>
<dbReference type="RefSeq" id="NP_001399279.1">
    <molecule id="Q80VP1-2"/>
    <property type="nucleotide sequence ID" value="NM_001412350.1"/>
</dbReference>
<dbReference type="RefSeq" id="NP_001399280.1">
    <molecule id="Q80VP1-2"/>
    <property type="nucleotide sequence ID" value="NM_001412351.1"/>
</dbReference>
<dbReference type="RefSeq" id="NP_001399281.1">
    <molecule id="Q80VP1-2"/>
    <property type="nucleotide sequence ID" value="NM_001412352.1"/>
</dbReference>
<dbReference type="RefSeq" id="NP_001399282.1">
    <molecule id="Q80VP1-2"/>
    <property type="nucleotide sequence ID" value="NM_001412353.1"/>
</dbReference>
<dbReference type="RefSeq" id="NP_034277.1">
    <molecule id="Q80VP1-1"/>
    <property type="nucleotide sequence ID" value="NM_010147.5"/>
</dbReference>
<dbReference type="RefSeq" id="XP_006539592.2">
    <property type="nucleotide sequence ID" value="XM_006539529.3"/>
</dbReference>
<dbReference type="RefSeq" id="XP_006539594.2">
    <molecule id="Q80VP1-2"/>
    <property type="nucleotide sequence ID" value="XM_006539531.4"/>
</dbReference>
<dbReference type="RefSeq" id="XP_006539596.1">
    <property type="nucleotide sequence ID" value="XM_006539533.1"/>
</dbReference>
<dbReference type="RefSeq" id="XP_006539597.1">
    <property type="nucleotide sequence ID" value="XM_006539534.1"/>
</dbReference>
<dbReference type="RefSeq" id="XP_006539598.1">
    <property type="nucleotide sequence ID" value="XM_006539535.1"/>
</dbReference>
<dbReference type="RefSeq" id="XP_006539599.1">
    <property type="nucleotide sequence ID" value="XM_006539536.1"/>
</dbReference>
<dbReference type="RefSeq" id="XP_036008553.1">
    <molecule id="Q80VP1-2"/>
    <property type="nucleotide sequence ID" value="XM_036152660.1"/>
</dbReference>
<dbReference type="RefSeq" id="XP_036008554.1">
    <molecule id="Q80VP1-1"/>
    <property type="nucleotide sequence ID" value="XM_036152661.1"/>
</dbReference>
<dbReference type="BMRB" id="Q80VP1"/>
<dbReference type="SMR" id="Q80VP1"/>
<dbReference type="BioGRID" id="199485">
    <property type="interactions" value="14"/>
</dbReference>
<dbReference type="DIP" id="DIP-43943N"/>
<dbReference type="ELM" id="Q80VP1"/>
<dbReference type="FunCoup" id="Q80VP1">
    <property type="interactions" value="604"/>
</dbReference>
<dbReference type="IntAct" id="Q80VP1">
    <property type="interactions" value="5"/>
</dbReference>
<dbReference type="MINT" id="Q80VP1"/>
<dbReference type="STRING" id="10090.ENSMUSP00000096445"/>
<dbReference type="GlyGen" id="Q80VP1">
    <property type="glycosylation" value="12 sites, 1 O-linked glycan (3 sites)"/>
</dbReference>
<dbReference type="iPTMnet" id="Q80VP1"/>
<dbReference type="PhosphoSitePlus" id="Q80VP1"/>
<dbReference type="SwissPalm" id="Q80VP1"/>
<dbReference type="jPOST" id="Q80VP1"/>
<dbReference type="PaxDb" id="10090-ENSMUSP00000096445"/>
<dbReference type="PeptideAtlas" id="Q80VP1"/>
<dbReference type="ProteomicsDB" id="275668">
    <molecule id="Q80VP1-1"/>
</dbReference>
<dbReference type="ProteomicsDB" id="275669">
    <molecule id="Q80VP1-2"/>
</dbReference>
<dbReference type="Pumba" id="Q80VP1"/>
<dbReference type="Antibodypedia" id="4051">
    <property type="antibodies" value="224 antibodies from 31 providers"/>
</dbReference>
<dbReference type="DNASU" id="13854"/>
<dbReference type="Ensembl" id="ENSMUST00000045277.7">
    <molecule id="Q80VP1-1"/>
    <property type="protein sequence ID" value="ENSMUSP00000043340.7"/>
    <property type="gene ID" value="ENSMUSG00000035203.17"/>
</dbReference>
<dbReference type="Ensembl" id="ENSMUST00000098845.10">
    <molecule id="Q80VP1-1"/>
    <property type="protein sequence ID" value="ENSMUSP00000096445.4"/>
    <property type="gene ID" value="ENSMUSG00000035203.17"/>
</dbReference>
<dbReference type="Ensembl" id="ENSMUST00000208634.2">
    <molecule id="Q80VP1-2"/>
    <property type="protein sequence ID" value="ENSMUSP00000146638.2"/>
    <property type="gene ID" value="ENSMUSG00000035203.17"/>
</dbReference>
<dbReference type="GeneID" id="13854"/>
<dbReference type="KEGG" id="mmu:13854"/>
<dbReference type="UCSC" id="uc009ezx.2">
    <molecule id="Q80VP1-1"/>
    <property type="organism name" value="mouse"/>
</dbReference>
<dbReference type="AGR" id="MGI:1333763"/>
<dbReference type="CTD" id="29924"/>
<dbReference type="MGI" id="MGI:1333763">
    <property type="gene designation" value="Epn1"/>
</dbReference>
<dbReference type="VEuPathDB" id="HostDB:ENSMUSG00000035203"/>
<dbReference type="eggNOG" id="KOG2056">
    <property type="taxonomic scope" value="Eukaryota"/>
</dbReference>
<dbReference type="GeneTree" id="ENSGT00940000160411"/>
<dbReference type="HOGENOM" id="CLU_012678_4_2_1"/>
<dbReference type="InParanoid" id="Q80VP1"/>
<dbReference type="OMA" id="IARCSFN"/>
<dbReference type="PhylomeDB" id="Q80VP1"/>
<dbReference type="TreeFam" id="TF313361"/>
<dbReference type="Reactome" id="R-MMU-182971">
    <property type="pathway name" value="EGFR downregulation"/>
</dbReference>
<dbReference type="Reactome" id="R-MMU-8856825">
    <property type="pathway name" value="Cargo recognition for clathrin-mediated endocytosis"/>
</dbReference>
<dbReference type="Reactome" id="R-MMU-8856828">
    <property type="pathway name" value="Clathrin-mediated endocytosis"/>
</dbReference>
<dbReference type="BioGRID-ORCS" id="13854">
    <property type="hits" value="8 hits in 78 CRISPR screens"/>
</dbReference>
<dbReference type="ChiTaRS" id="Epn1">
    <property type="organism name" value="mouse"/>
</dbReference>
<dbReference type="PRO" id="PR:Q80VP1"/>
<dbReference type="Proteomes" id="UP000000589">
    <property type="component" value="Chromosome 7"/>
</dbReference>
<dbReference type="RNAct" id="Q80VP1">
    <property type="molecule type" value="protein"/>
</dbReference>
<dbReference type="Bgee" id="ENSMUSG00000035203">
    <property type="expression patterns" value="Expressed in ileal epithelium and 235 other cell types or tissues"/>
</dbReference>
<dbReference type="ExpressionAtlas" id="Q80VP1">
    <property type="expression patterns" value="baseline and differential"/>
</dbReference>
<dbReference type="GO" id="GO:0005905">
    <property type="term" value="C:clathrin-coated pit"/>
    <property type="evidence" value="ECO:0007669"/>
    <property type="project" value="UniProtKB-SubCell"/>
</dbReference>
<dbReference type="GO" id="GO:0005737">
    <property type="term" value="C:cytoplasm"/>
    <property type="evidence" value="ECO:0007669"/>
    <property type="project" value="UniProtKB-SubCell"/>
</dbReference>
<dbReference type="GO" id="GO:0005634">
    <property type="term" value="C:nucleus"/>
    <property type="evidence" value="ECO:0007669"/>
    <property type="project" value="UniProtKB-SubCell"/>
</dbReference>
<dbReference type="GO" id="GO:0005886">
    <property type="term" value="C:plasma membrane"/>
    <property type="evidence" value="ECO:0007669"/>
    <property type="project" value="UniProtKB-SubCell"/>
</dbReference>
<dbReference type="GO" id="GO:0008289">
    <property type="term" value="F:lipid binding"/>
    <property type="evidence" value="ECO:0007669"/>
    <property type="project" value="UniProtKB-KW"/>
</dbReference>
<dbReference type="GO" id="GO:0140313">
    <property type="term" value="F:molecular sequestering activity"/>
    <property type="evidence" value="ECO:0007669"/>
    <property type="project" value="Ensembl"/>
</dbReference>
<dbReference type="GO" id="GO:0048568">
    <property type="term" value="P:embryonic organ development"/>
    <property type="evidence" value="ECO:0000316"/>
    <property type="project" value="MGI"/>
</dbReference>
<dbReference type="GO" id="GO:0006897">
    <property type="term" value="P:endocytosis"/>
    <property type="evidence" value="ECO:0007669"/>
    <property type="project" value="UniProtKB-KW"/>
</dbReference>
<dbReference type="GO" id="GO:0007565">
    <property type="term" value="P:female pregnancy"/>
    <property type="evidence" value="ECO:0000316"/>
    <property type="project" value="MGI"/>
</dbReference>
<dbReference type="GO" id="GO:0001701">
    <property type="term" value="P:in utero embryonic development"/>
    <property type="evidence" value="ECO:0000316"/>
    <property type="project" value="MGI"/>
</dbReference>
<dbReference type="GO" id="GO:1903671">
    <property type="term" value="P:negative regulation of sprouting angiogenesis"/>
    <property type="evidence" value="ECO:0007669"/>
    <property type="project" value="Ensembl"/>
</dbReference>
<dbReference type="GO" id="GO:0007219">
    <property type="term" value="P:Notch signaling pathway"/>
    <property type="evidence" value="ECO:0000316"/>
    <property type="project" value="MGI"/>
</dbReference>
<dbReference type="CDD" id="cd16990">
    <property type="entry name" value="ENTH_Epsin"/>
    <property type="match status" value="1"/>
</dbReference>
<dbReference type="DisProt" id="DP01993"/>
<dbReference type="FunFam" id="1.25.40.90:FF:000002">
    <property type="entry name" value="epsin-2 isoform X1"/>
    <property type="match status" value="1"/>
</dbReference>
<dbReference type="Gene3D" id="1.25.40.90">
    <property type="match status" value="1"/>
</dbReference>
<dbReference type="InterPro" id="IPR013809">
    <property type="entry name" value="ENTH"/>
</dbReference>
<dbReference type="InterPro" id="IPR008942">
    <property type="entry name" value="ENTH_VHS"/>
</dbReference>
<dbReference type="InterPro" id="IPR003903">
    <property type="entry name" value="UIM_dom"/>
</dbReference>
<dbReference type="PANTHER" id="PTHR12276:SF48">
    <property type="entry name" value="EPSIN-1"/>
    <property type="match status" value="1"/>
</dbReference>
<dbReference type="PANTHER" id="PTHR12276">
    <property type="entry name" value="EPSIN/ENT-RELATED"/>
    <property type="match status" value="1"/>
</dbReference>
<dbReference type="Pfam" id="PF01417">
    <property type="entry name" value="ENTH"/>
    <property type="match status" value="1"/>
</dbReference>
<dbReference type="SMART" id="SM00273">
    <property type="entry name" value="ENTH"/>
    <property type="match status" value="1"/>
</dbReference>
<dbReference type="SMART" id="SM00726">
    <property type="entry name" value="UIM"/>
    <property type="match status" value="3"/>
</dbReference>
<dbReference type="SUPFAM" id="SSF48464">
    <property type="entry name" value="ENTH/VHS domain"/>
    <property type="match status" value="1"/>
</dbReference>
<dbReference type="PROSITE" id="PS50942">
    <property type="entry name" value="ENTH"/>
    <property type="match status" value="1"/>
</dbReference>
<dbReference type="PROSITE" id="PS50330">
    <property type="entry name" value="UIM"/>
    <property type="match status" value="3"/>
</dbReference>
<name>EPN1_MOUSE</name>
<protein>
    <recommendedName>
        <fullName>Epsin-1</fullName>
    </recommendedName>
    <alternativeName>
        <fullName>EPS-15-interacting protein 1</fullName>
    </alternativeName>
    <alternativeName>
        <fullName>Intersectin-EH-binding protein 1</fullName>
        <shortName>Ibp1</shortName>
    </alternativeName>
</protein>
<comment type="function">
    <text evidence="2 3">Binds to membranes enriched in phosphatidylinositol 4,5-bisphosphate (PtdIns(4,5)P2). Modifies membrane curvature and facilitates the formation of clathrin-coated invaginations (By similarity). Regulates receptor-mediated endocytosis (By similarity).</text>
</comment>
<comment type="subunit">
    <text evidence="2 3 7 8">Monomer. Binds clathrin and ZBTB16/ZNF145 (By similarity). Binds ubiquitinated proteins (By similarity). Interacts with RALBP1 in a complex also containing NUMB and TFAP2A during interphase and mitosis (By similarity). Interacts with AP2B1 (By similarity). Interacts with UBQLN2 (By similarity). Interacts with ITSN1. Interacts with AP2A1 and AP2A2. Interacts with REPS2; the interaction is direct (By similarity). Interacts with EPS15; the interaction is direct (By similarity). Interacts with ENTREP1 (By similarity).</text>
</comment>
<comment type="subcellular location">
    <subcellularLocation>
        <location evidence="1">Cytoplasm</location>
    </subcellularLocation>
    <subcellularLocation>
        <location evidence="1">Cell membrane</location>
        <topology evidence="1">Peripheral membrane protein</topology>
    </subcellularLocation>
    <subcellularLocation>
        <location evidence="1">Nucleus</location>
    </subcellularLocation>
    <subcellularLocation>
        <location evidence="1">Membrane</location>
        <location evidence="1">Clathrin-coated pit</location>
    </subcellularLocation>
    <text evidence="1">Associated with the cytoplasmic membrane at sites where clathrin-coated pits are forming. Colocalizes with clathrin and AP-2 in a punctate pattern on the plasma membrane. Detected in presynaptic nerve terminals and in Golgi stacks. May shuttle to the nucleus when associated with ZBTB16/ZNF145 (By similarity).</text>
</comment>
<comment type="alternative products">
    <event type="alternative splicing"/>
    <isoform>
        <id>Q80VP1-1</id>
        <name>1</name>
        <sequence type="displayed"/>
    </isoform>
    <isoform>
        <id>Q80VP1-2</id>
        <name>2</name>
        <sequence type="described" ref="VSP_009153"/>
    </isoform>
</comment>
<comment type="domain">
    <text>The NPF repeat domain is involved in EPS15 binding.</text>
</comment>
<comment type="domain">
    <text>The DPW repeat domain is involved in AP2A2 and clathrin binding.</text>
</comment>
<comment type="domain">
    <text evidence="1">The [DE]-X(1,2)-F-X-X-[FL]-X-X-X-R motif mediates interaction the AP-2 complex subunit AP2B1.</text>
</comment>
<comment type="PTM">
    <text evidence="8">Phosphorylated on serine and/or threonine residues in mitotic cells. Phosphorylation reduces interaction with REPS2, AP-2 and the membrane fraction. Depolarization of synaptosomes results in dephosphorylation.</text>
</comment>
<comment type="PTM">
    <text evidence="1">Ubiquitinated.</text>
</comment>
<comment type="similarity">
    <text evidence="10">Belongs to the epsin family.</text>
</comment>
<comment type="online information" name="Protein Spotlight">
    <link uri="https://www.proteinspotlight.org/back_issues/042"/>
    <text>The bubble's bend - Issue 42 of January 2004</text>
</comment>
<sequence length="575" mass="60212">MSTSSLRRQMKNIVHNYSEAEIKVREATSNDPWGPSSSLMSEIADLTYNVVAFSEIMSMIWKRLNDHGKNWRHVYKAMTLMEYLIKTGSERVSQQCKENMYAVQTLKDFQYVDRDGKDQGVNVREKAKQLVALLRDEDRLREERAHALKTKEKLAQTATASSAAVGSGPPPEAEQAWPQSSGEEELQLQLALAMSKEEADQPPSCGPEDDVQLQLALSLSREEHDKEERIRRGDDLRLQMAIEESKRETGGKEESSLMDLADVFTTPAPPQASDPWGGPASVPTAVPVAAAASDPWGGPAVPPAADPWGGAAPTPASGDPWRPAAPTGPSVDPWGGTPAPAAGEGPTPDPWGSSDGGAPVSGPPSSDPWAPAPAFSDPWGGSPAKPSSNGTAVGGFDTEPDEFSDFDRLRTALPTSGSSTGELELLAGEVPARSPGAFDMSGVGGSLAESVGSPPPAATPTPTPPTRKTPESFLGPNAALVDLDSLVSRPGPTPPGSKASNPFLPSGAPPTGPSVTNPFQPAPPATLTLNQLRLSPVPPVPGAPPTYISPLGGGPGLPPMMPPGPPAPNTNPFLL</sequence>
<feature type="chain" id="PRO_0000074514" description="Epsin-1">
    <location>
        <begin position="1"/>
        <end position="575"/>
    </location>
</feature>
<feature type="domain" description="ENTH" evidence="5">
    <location>
        <begin position="12"/>
        <end position="144"/>
    </location>
</feature>
<feature type="domain" description="UIM 1" evidence="4">
    <location>
        <begin position="183"/>
        <end position="202"/>
    </location>
</feature>
<feature type="domain" description="UIM 2" evidence="4">
    <location>
        <begin position="208"/>
        <end position="227"/>
    </location>
</feature>
<feature type="domain" description="UIM 3" evidence="4">
    <location>
        <begin position="233"/>
        <end position="252"/>
    </location>
</feature>
<feature type="repeat" description="1">
    <location>
        <begin position="274"/>
        <end position="276"/>
    </location>
</feature>
<feature type="repeat" description="2">
    <location>
        <begin position="294"/>
        <end position="296"/>
    </location>
</feature>
<feature type="repeat" description="3">
    <location>
        <begin position="306"/>
        <end position="308"/>
    </location>
</feature>
<feature type="repeat" description="4">
    <location>
        <begin position="319"/>
        <end position="321"/>
    </location>
</feature>
<feature type="repeat" description="5">
    <location>
        <begin position="332"/>
        <end position="334"/>
    </location>
</feature>
<feature type="repeat" description="6">
    <location>
        <begin position="349"/>
        <end position="351"/>
    </location>
</feature>
<feature type="repeat" description="7">
    <location>
        <begin position="367"/>
        <end position="369"/>
    </location>
</feature>
<feature type="repeat" description="8">
    <location>
        <begin position="377"/>
        <end position="379"/>
    </location>
</feature>
<feature type="repeat" description="1">
    <location>
        <begin position="501"/>
        <end position="503"/>
    </location>
</feature>
<feature type="repeat" description="2">
    <location>
        <begin position="517"/>
        <end position="519"/>
    </location>
</feature>
<feature type="repeat" description="3">
    <location>
        <begin position="571"/>
        <end position="573"/>
    </location>
</feature>
<feature type="region of interest" description="Disordered" evidence="6">
    <location>
        <begin position="150"/>
        <end position="186"/>
    </location>
</feature>
<feature type="region of interest" description="Disordered" evidence="6">
    <location>
        <begin position="264"/>
        <end position="575"/>
    </location>
</feature>
<feature type="region of interest" description="8 X 3 AA repeats of D-P-W">
    <location>
        <begin position="274"/>
        <end position="379"/>
    </location>
</feature>
<feature type="region of interest" description="3 X 3 AA repeats of N-P-F">
    <location>
        <begin position="501"/>
        <end position="573"/>
    </location>
</feature>
<feature type="short sequence motif" description="[DE]-X(1,2)-F-X-X-[FL]-X-X-X-R motif">
    <location>
        <begin position="401"/>
        <end position="410"/>
    </location>
</feature>
<feature type="compositionally biased region" description="Low complexity" evidence="6">
    <location>
        <begin position="157"/>
        <end position="167"/>
    </location>
</feature>
<feature type="compositionally biased region" description="Low complexity" evidence="6">
    <location>
        <begin position="279"/>
        <end position="299"/>
    </location>
</feature>
<feature type="compositionally biased region" description="Low complexity" evidence="6">
    <location>
        <begin position="306"/>
        <end position="316"/>
    </location>
</feature>
<feature type="compositionally biased region" description="Low complexity" evidence="6">
    <location>
        <begin position="332"/>
        <end position="346"/>
    </location>
</feature>
<feature type="compositionally biased region" description="Low complexity" evidence="6">
    <location>
        <begin position="367"/>
        <end position="379"/>
    </location>
</feature>
<feature type="compositionally biased region" description="Pro residues" evidence="6">
    <location>
        <begin position="453"/>
        <end position="467"/>
    </location>
</feature>
<feature type="compositionally biased region" description="Pro residues" evidence="6">
    <location>
        <begin position="556"/>
        <end position="569"/>
    </location>
</feature>
<feature type="binding site" evidence="1">
    <location>
        <position position="11"/>
    </location>
    <ligand>
        <name>a 1,2-diacyl-sn-glycero-3-phospho-(1D-myo-inositol-4,5-bisphosphate)</name>
        <dbReference type="ChEBI" id="CHEBI:58456"/>
    </ligand>
</feature>
<feature type="binding site" evidence="1">
    <location>
        <position position="25"/>
    </location>
    <ligand>
        <name>a 1,2-diacyl-sn-glycero-3-phospho-(1D-myo-inositol-4,5-bisphosphate)</name>
        <dbReference type="ChEBI" id="CHEBI:58456"/>
    </ligand>
</feature>
<feature type="binding site" evidence="1">
    <location>
        <position position="30"/>
    </location>
    <ligand>
        <name>a 1,2-diacyl-sn-glycero-3-phospho-(1D-myo-inositol-4,5-bisphosphate)</name>
        <dbReference type="ChEBI" id="CHEBI:58456"/>
    </ligand>
</feature>
<feature type="binding site" evidence="1">
    <location>
        <position position="63"/>
    </location>
    <ligand>
        <name>a 1,2-diacyl-sn-glycero-3-phospho-(1D-myo-inositol-4,5-bisphosphate)</name>
        <dbReference type="ChEBI" id="CHEBI:58456"/>
    </ligand>
</feature>
<feature type="binding site" evidence="1">
    <location>
        <position position="73"/>
    </location>
    <ligand>
        <name>a 1,2-diacyl-sn-glycero-3-phospho-(1D-myo-inositol-4,5-bisphosphate)</name>
        <dbReference type="ChEBI" id="CHEBI:58456"/>
    </ligand>
</feature>
<feature type="modified residue" description="Phosphoserine" evidence="3">
    <location>
        <position position="382"/>
    </location>
</feature>
<feature type="modified residue" description="Phosphoserine" evidence="12">
    <location>
        <position position="418"/>
    </location>
</feature>
<feature type="modified residue" description="Phosphoserine" evidence="12">
    <location>
        <position position="419"/>
    </location>
</feature>
<feature type="modified residue" description="Phosphothreonine" evidence="12">
    <location>
        <position position="420"/>
    </location>
</feature>
<feature type="modified residue" description="Phosphoserine" evidence="3">
    <location>
        <position position="434"/>
    </location>
</feature>
<feature type="modified residue" description="Phosphoserine" evidence="3">
    <location>
        <position position="446"/>
    </location>
</feature>
<feature type="modified residue" description="Phosphoserine" evidence="3">
    <location>
        <position position="453"/>
    </location>
</feature>
<feature type="modified residue" description="Phosphothreonine" evidence="12">
    <location>
        <position position="459"/>
    </location>
</feature>
<feature type="modified residue" description="Phosphothreonine" evidence="3">
    <location>
        <position position="463"/>
    </location>
</feature>
<feature type="modified residue" description="Phosphothreonine" evidence="11 12">
    <location>
        <position position="469"/>
    </location>
</feature>
<feature type="modified residue" description="Phosphoserine" evidence="12">
    <location>
        <position position="472"/>
    </location>
</feature>
<feature type="modified residue" description="Phosphothreonine" evidence="12">
    <location>
        <position position="493"/>
    </location>
</feature>
<feature type="modified residue" description="Omega-N-methylarginine" evidence="13">
    <location>
        <position position="533"/>
    </location>
</feature>
<feature type="splice variant" id="VSP_009153" description="In isoform 2." evidence="9">
    <original>A</original>
    <variation>AA</variation>
    <location>
        <position position="392"/>
    </location>
</feature>
<evidence type="ECO:0000250" key="1"/>
<evidence type="ECO:0000250" key="2">
    <source>
        <dbReference type="UniProtKB" id="O88339"/>
    </source>
</evidence>
<evidence type="ECO:0000250" key="3">
    <source>
        <dbReference type="UniProtKB" id="Q9Y6I3"/>
    </source>
</evidence>
<evidence type="ECO:0000255" key="4">
    <source>
        <dbReference type="PROSITE-ProRule" id="PRU00213"/>
    </source>
</evidence>
<evidence type="ECO:0000255" key="5">
    <source>
        <dbReference type="PROSITE-ProRule" id="PRU00243"/>
    </source>
</evidence>
<evidence type="ECO:0000256" key="6">
    <source>
        <dbReference type="SAM" id="MobiDB-lite"/>
    </source>
</evidence>
<evidence type="ECO:0000269" key="7">
    <source>
    </source>
</evidence>
<evidence type="ECO:0000269" key="8">
    <source>
    </source>
</evidence>
<evidence type="ECO:0000303" key="9">
    <source>
    </source>
</evidence>
<evidence type="ECO:0000305" key="10"/>
<evidence type="ECO:0007744" key="11">
    <source>
    </source>
</evidence>
<evidence type="ECO:0007744" key="12">
    <source>
    </source>
</evidence>
<evidence type="ECO:0007744" key="13">
    <source>
    </source>
</evidence>